<accession>A9N581</accession>
<organism>
    <name type="scientific">Salmonella paratyphi B (strain ATCC BAA-1250 / SPB7)</name>
    <dbReference type="NCBI Taxonomy" id="1016998"/>
    <lineage>
        <taxon>Bacteria</taxon>
        <taxon>Pseudomonadati</taxon>
        <taxon>Pseudomonadota</taxon>
        <taxon>Gammaproteobacteria</taxon>
        <taxon>Enterobacterales</taxon>
        <taxon>Enterobacteriaceae</taxon>
        <taxon>Salmonella</taxon>
    </lineage>
</organism>
<feature type="chain" id="PRO_0000376369" description="NADH-quinone oxidoreductase subunit B">
    <location>
        <begin position="1"/>
        <end position="220"/>
    </location>
</feature>
<feature type="binding site" evidence="1">
    <location>
        <position position="63"/>
    </location>
    <ligand>
        <name>[4Fe-4S] cluster</name>
        <dbReference type="ChEBI" id="CHEBI:49883"/>
    </ligand>
</feature>
<feature type="binding site" evidence="1">
    <location>
        <position position="64"/>
    </location>
    <ligand>
        <name>[4Fe-4S] cluster</name>
        <dbReference type="ChEBI" id="CHEBI:49883"/>
    </ligand>
</feature>
<feature type="binding site" evidence="1">
    <location>
        <position position="129"/>
    </location>
    <ligand>
        <name>[4Fe-4S] cluster</name>
        <dbReference type="ChEBI" id="CHEBI:49883"/>
    </ligand>
</feature>
<feature type="binding site" evidence="1">
    <location>
        <position position="158"/>
    </location>
    <ligand>
        <name>[4Fe-4S] cluster</name>
        <dbReference type="ChEBI" id="CHEBI:49883"/>
    </ligand>
</feature>
<protein>
    <recommendedName>
        <fullName evidence="1">NADH-quinone oxidoreductase subunit B</fullName>
        <ecNumber evidence="1">7.1.1.-</ecNumber>
    </recommendedName>
    <alternativeName>
        <fullName evidence="1">NADH dehydrogenase I subunit B</fullName>
    </alternativeName>
    <alternativeName>
        <fullName evidence="1">NDH-1 subunit B</fullName>
    </alternativeName>
</protein>
<name>NUOB_SALPB</name>
<keyword id="KW-0004">4Fe-4S</keyword>
<keyword id="KW-0997">Cell inner membrane</keyword>
<keyword id="KW-1003">Cell membrane</keyword>
<keyword id="KW-0408">Iron</keyword>
<keyword id="KW-0411">Iron-sulfur</keyword>
<keyword id="KW-0472">Membrane</keyword>
<keyword id="KW-0479">Metal-binding</keyword>
<keyword id="KW-0520">NAD</keyword>
<keyword id="KW-0874">Quinone</keyword>
<keyword id="KW-1278">Translocase</keyword>
<keyword id="KW-0813">Transport</keyword>
<keyword id="KW-0830">Ubiquinone</keyword>
<gene>
    <name evidence="1" type="primary">nuoB</name>
    <name type="ordered locus">SPAB_00651</name>
</gene>
<proteinExistence type="inferred from homology"/>
<comment type="function">
    <text evidence="1">NDH-1 shuttles electrons from NADH, via FMN and iron-sulfur (Fe-S) centers, to quinones in the respiratory chain. The immediate electron acceptor for the enzyme in this species is believed to be ubiquinone. Couples the redox reaction to proton translocation (for every two electrons transferred, four hydrogen ions are translocated across the cytoplasmic membrane), and thus conserves the redox energy in a proton gradient.</text>
</comment>
<comment type="catalytic activity">
    <reaction evidence="1">
        <text>a quinone + NADH + 5 H(+)(in) = a quinol + NAD(+) + 4 H(+)(out)</text>
        <dbReference type="Rhea" id="RHEA:57888"/>
        <dbReference type="ChEBI" id="CHEBI:15378"/>
        <dbReference type="ChEBI" id="CHEBI:24646"/>
        <dbReference type="ChEBI" id="CHEBI:57540"/>
        <dbReference type="ChEBI" id="CHEBI:57945"/>
        <dbReference type="ChEBI" id="CHEBI:132124"/>
    </reaction>
</comment>
<comment type="cofactor">
    <cofactor evidence="1">
        <name>[4Fe-4S] cluster</name>
        <dbReference type="ChEBI" id="CHEBI:49883"/>
    </cofactor>
    <text evidence="1">Binds 1 [4Fe-4S] cluster.</text>
</comment>
<comment type="subunit">
    <text evidence="1">NDH-1 is composed of 13 different subunits. Subunits NuoB, CD, E, F, and G constitute the peripheral sector of the complex.</text>
</comment>
<comment type="subcellular location">
    <subcellularLocation>
        <location evidence="1">Cell inner membrane</location>
        <topology evidence="1">Peripheral membrane protein</topology>
        <orientation evidence="1">Cytoplasmic side</orientation>
    </subcellularLocation>
</comment>
<comment type="similarity">
    <text evidence="1">Belongs to the complex I 20 kDa subunit family.</text>
</comment>
<evidence type="ECO:0000255" key="1">
    <source>
        <dbReference type="HAMAP-Rule" id="MF_01356"/>
    </source>
</evidence>
<reference key="1">
    <citation type="submission" date="2007-11" db="EMBL/GenBank/DDBJ databases">
        <authorList>
            <consortium name="The Salmonella enterica serovar Paratyphi B Genome Sequencing Project"/>
            <person name="McClelland M."/>
            <person name="Sanderson E.K."/>
            <person name="Porwollik S."/>
            <person name="Spieth J."/>
            <person name="Clifton W.S."/>
            <person name="Fulton R."/>
            <person name="Cordes M."/>
            <person name="Wollam A."/>
            <person name="Shah N."/>
            <person name="Pepin K."/>
            <person name="Bhonagiri V."/>
            <person name="Nash W."/>
            <person name="Johnson M."/>
            <person name="Thiruvilangam P."/>
            <person name="Wilson R."/>
        </authorList>
    </citation>
    <scope>NUCLEOTIDE SEQUENCE [LARGE SCALE GENOMIC DNA]</scope>
    <source>
        <strain>ATCC BAA-1250 / SPB7</strain>
    </source>
</reference>
<dbReference type="EC" id="7.1.1.-" evidence="1"/>
<dbReference type="EMBL" id="CP000886">
    <property type="protein sequence ID" value="ABX66077.1"/>
    <property type="molecule type" value="Genomic_DNA"/>
</dbReference>
<dbReference type="RefSeq" id="WP_000386728.1">
    <property type="nucleotide sequence ID" value="NC_010102.1"/>
</dbReference>
<dbReference type="SMR" id="A9N581"/>
<dbReference type="KEGG" id="spq:SPAB_00651"/>
<dbReference type="PATRIC" id="fig|1016998.12.peg.611"/>
<dbReference type="HOGENOM" id="CLU_055737_7_3_6"/>
<dbReference type="BioCyc" id="SENT1016998:SPAB_RS02700-MONOMER"/>
<dbReference type="Proteomes" id="UP000008556">
    <property type="component" value="Chromosome"/>
</dbReference>
<dbReference type="GO" id="GO:0005886">
    <property type="term" value="C:plasma membrane"/>
    <property type="evidence" value="ECO:0007669"/>
    <property type="project" value="UniProtKB-SubCell"/>
</dbReference>
<dbReference type="GO" id="GO:0045271">
    <property type="term" value="C:respiratory chain complex I"/>
    <property type="evidence" value="ECO:0007669"/>
    <property type="project" value="TreeGrafter"/>
</dbReference>
<dbReference type="GO" id="GO:0051539">
    <property type="term" value="F:4 iron, 4 sulfur cluster binding"/>
    <property type="evidence" value="ECO:0007669"/>
    <property type="project" value="UniProtKB-KW"/>
</dbReference>
<dbReference type="GO" id="GO:0005506">
    <property type="term" value="F:iron ion binding"/>
    <property type="evidence" value="ECO:0007669"/>
    <property type="project" value="UniProtKB-UniRule"/>
</dbReference>
<dbReference type="GO" id="GO:0008137">
    <property type="term" value="F:NADH dehydrogenase (ubiquinone) activity"/>
    <property type="evidence" value="ECO:0007669"/>
    <property type="project" value="InterPro"/>
</dbReference>
<dbReference type="GO" id="GO:0050136">
    <property type="term" value="F:NADH:ubiquinone reductase (non-electrogenic) activity"/>
    <property type="evidence" value="ECO:0007669"/>
    <property type="project" value="UniProtKB-UniRule"/>
</dbReference>
<dbReference type="GO" id="GO:0048038">
    <property type="term" value="F:quinone binding"/>
    <property type="evidence" value="ECO:0007669"/>
    <property type="project" value="UniProtKB-KW"/>
</dbReference>
<dbReference type="GO" id="GO:0009060">
    <property type="term" value="P:aerobic respiration"/>
    <property type="evidence" value="ECO:0007669"/>
    <property type="project" value="TreeGrafter"/>
</dbReference>
<dbReference type="GO" id="GO:0015990">
    <property type="term" value="P:electron transport coupled proton transport"/>
    <property type="evidence" value="ECO:0007669"/>
    <property type="project" value="TreeGrafter"/>
</dbReference>
<dbReference type="FunFam" id="3.40.50.12280:FF:000002">
    <property type="entry name" value="NADH-quinone oxidoreductase subunit B"/>
    <property type="match status" value="1"/>
</dbReference>
<dbReference type="Gene3D" id="3.40.50.12280">
    <property type="match status" value="1"/>
</dbReference>
<dbReference type="HAMAP" id="MF_01356">
    <property type="entry name" value="NDH1_NuoB"/>
    <property type="match status" value="1"/>
</dbReference>
<dbReference type="InterPro" id="IPR006137">
    <property type="entry name" value="NADH_UbQ_OxRdtase-like_20kDa"/>
</dbReference>
<dbReference type="InterPro" id="IPR006138">
    <property type="entry name" value="NADH_UQ_OxRdtase_20Kd_su"/>
</dbReference>
<dbReference type="NCBIfam" id="TIGR01957">
    <property type="entry name" value="nuoB_fam"/>
    <property type="match status" value="1"/>
</dbReference>
<dbReference type="NCBIfam" id="NF005012">
    <property type="entry name" value="PRK06411.1"/>
    <property type="match status" value="1"/>
</dbReference>
<dbReference type="PANTHER" id="PTHR11995">
    <property type="entry name" value="NADH DEHYDROGENASE"/>
    <property type="match status" value="1"/>
</dbReference>
<dbReference type="PANTHER" id="PTHR11995:SF14">
    <property type="entry name" value="NADH DEHYDROGENASE [UBIQUINONE] IRON-SULFUR PROTEIN 7, MITOCHONDRIAL"/>
    <property type="match status" value="1"/>
</dbReference>
<dbReference type="Pfam" id="PF01058">
    <property type="entry name" value="Oxidored_q6"/>
    <property type="match status" value="1"/>
</dbReference>
<dbReference type="SUPFAM" id="SSF56770">
    <property type="entry name" value="HydA/Nqo6-like"/>
    <property type="match status" value="1"/>
</dbReference>
<dbReference type="PROSITE" id="PS01150">
    <property type="entry name" value="COMPLEX1_20K"/>
    <property type="match status" value="1"/>
</dbReference>
<sequence length="220" mass="25089">MDYTLTRIDPNGENDRYPLQKQEIVTDPLEQEVNKNVFMGKLHDMVNWGRKNSIWPYNFGLSCCYVEMVTSFTAVHDVARFGAEVLRASPRQADLMVVAGTCFTKMAPVIQRLYDQMLEPKWVISMGACANSGGMYDIYSVVQGVDKFIPVDVYIPGCPPRPEAYMQALMLLQESIGKERRPLSWVVGDQGVYRANMQPERERKRGERIAVTNLRTPDEI</sequence>